<sequence>MQHLEEIIANASAAIEAAESLVVLDEVRVQYLGKKGELTAQLQSLGKLPPEERREAGQEINKAKGAVQQAIAARKDALQRAELEAKLAAETIDVTLPGRRIENGGLHPVTRTVERIEQFFGELGFNTESGPEIEDAFHNFDALNIAEDHPARTDHDTFFFNPDLMLRTHTSGVQIRTMENGKPPFRFIAPGRVYRNDYDQTHTPMFHQVEGMLVDENVNFAQLKGILHDFLCNFFEEEVEVRFRPSYFPFTEPSAEVDVKGKNGKWLEVLGCGMVHPNVLRSVGIDPEKYSGFAFGMGVERLTMLRYGVNDLRAFFENDLRFLKQFK</sequence>
<name>SYFA_VIBC1</name>
<evidence type="ECO:0000255" key="1">
    <source>
        <dbReference type="HAMAP-Rule" id="MF_00281"/>
    </source>
</evidence>
<proteinExistence type="inferred from homology"/>
<feature type="chain" id="PRO_1000006913" description="Phenylalanine--tRNA ligase alpha subunit">
    <location>
        <begin position="1"/>
        <end position="327"/>
    </location>
</feature>
<feature type="binding site" evidence="1">
    <location>
        <position position="252"/>
    </location>
    <ligand>
        <name>Mg(2+)</name>
        <dbReference type="ChEBI" id="CHEBI:18420"/>
        <note>shared with beta subunit</note>
    </ligand>
</feature>
<accession>A7MVJ5</accession>
<dbReference type="EC" id="6.1.1.20" evidence="1"/>
<dbReference type="EMBL" id="CP000789">
    <property type="protein sequence ID" value="ABU71057.1"/>
    <property type="molecule type" value="Genomic_DNA"/>
</dbReference>
<dbReference type="RefSeq" id="WP_012127825.1">
    <property type="nucleotide sequence ID" value="NC_009783.1"/>
</dbReference>
<dbReference type="SMR" id="A7MVJ5"/>
<dbReference type="KEGG" id="vha:VIBHAR_02092"/>
<dbReference type="PATRIC" id="fig|338187.25.peg.601"/>
<dbReference type="Proteomes" id="UP000008152">
    <property type="component" value="Chromosome I"/>
</dbReference>
<dbReference type="GO" id="GO:0005737">
    <property type="term" value="C:cytoplasm"/>
    <property type="evidence" value="ECO:0007669"/>
    <property type="project" value="UniProtKB-SubCell"/>
</dbReference>
<dbReference type="GO" id="GO:0005524">
    <property type="term" value="F:ATP binding"/>
    <property type="evidence" value="ECO:0007669"/>
    <property type="project" value="UniProtKB-UniRule"/>
</dbReference>
<dbReference type="GO" id="GO:0000287">
    <property type="term" value="F:magnesium ion binding"/>
    <property type="evidence" value="ECO:0007669"/>
    <property type="project" value="UniProtKB-UniRule"/>
</dbReference>
<dbReference type="GO" id="GO:0004826">
    <property type="term" value="F:phenylalanine-tRNA ligase activity"/>
    <property type="evidence" value="ECO:0007669"/>
    <property type="project" value="UniProtKB-UniRule"/>
</dbReference>
<dbReference type="GO" id="GO:0000049">
    <property type="term" value="F:tRNA binding"/>
    <property type="evidence" value="ECO:0007669"/>
    <property type="project" value="InterPro"/>
</dbReference>
<dbReference type="GO" id="GO:0006432">
    <property type="term" value="P:phenylalanyl-tRNA aminoacylation"/>
    <property type="evidence" value="ECO:0007669"/>
    <property type="project" value="UniProtKB-UniRule"/>
</dbReference>
<dbReference type="CDD" id="cd00496">
    <property type="entry name" value="PheRS_alpha_core"/>
    <property type="match status" value="1"/>
</dbReference>
<dbReference type="FunFam" id="3.30.930.10:FF:000003">
    <property type="entry name" value="Phenylalanine--tRNA ligase alpha subunit"/>
    <property type="match status" value="1"/>
</dbReference>
<dbReference type="Gene3D" id="3.30.930.10">
    <property type="entry name" value="Bira Bifunctional Protein, Domain 2"/>
    <property type="match status" value="1"/>
</dbReference>
<dbReference type="HAMAP" id="MF_00281">
    <property type="entry name" value="Phe_tRNA_synth_alpha1"/>
    <property type="match status" value="1"/>
</dbReference>
<dbReference type="InterPro" id="IPR006195">
    <property type="entry name" value="aa-tRNA-synth_II"/>
</dbReference>
<dbReference type="InterPro" id="IPR045864">
    <property type="entry name" value="aa-tRNA-synth_II/BPL/LPL"/>
</dbReference>
<dbReference type="InterPro" id="IPR004529">
    <property type="entry name" value="Phe-tRNA-synth_IIc_asu"/>
</dbReference>
<dbReference type="InterPro" id="IPR004188">
    <property type="entry name" value="Phe-tRNA_ligase_II_N"/>
</dbReference>
<dbReference type="InterPro" id="IPR022911">
    <property type="entry name" value="Phe_tRNA_ligase_alpha1_bac"/>
</dbReference>
<dbReference type="InterPro" id="IPR002319">
    <property type="entry name" value="Phenylalanyl-tRNA_Synthase"/>
</dbReference>
<dbReference type="InterPro" id="IPR010978">
    <property type="entry name" value="tRNA-bd_arm"/>
</dbReference>
<dbReference type="NCBIfam" id="TIGR00468">
    <property type="entry name" value="pheS"/>
    <property type="match status" value="1"/>
</dbReference>
<dbReference type="PANTHER" id="PTHR11538:SF41">
    <property type="entry name" value="PHENYLALANINE--TRNA LIGASE, MITOCHONDRIAL"/>
    <property type="match status" value="1"/>
</dbReference>
<dbReference type="PANTHER" id="PTHR11538">
    <property type="entry name" value="PHENYLALANYL-TRNA SYNTHETASE"/>
    <property type="match status" value="1"/>
</dbReference>
<dbReference type="Pfam" id="PF02912">
    <property type="entry name" value="Phe_tRNA-synt_N"/>
    <property type="match status" value="1"/>
</dbReference>
<dbReference type="Pfam" id="PF01409">
    <property type="entry name" value="tRNA-synt_2d"/>
    <property type="match status" value="1"/>
</dbReference>
<dbReference type="SUPFAM" id="SSF55681">
    <property type="entry name" value="Class II aaRS and biotin synthetases"/>
    <property type="match status" value="1"/>
</dbReference>
<dbReference type="SUPFAM" id="SSF46589">
    <property type="entry name" value="tRNA-binding arm"/>
    <property type="match status" value="1"/>
</dbReference>
<dbReference type="PROSITE" id="PS50862">
    <property type="entry name" value="AA_TRNA_LIGASE_II"/>
    <property type="match status" value="1"/>
</dbReference>
<protein>
    <recommendedName>
        <fullName evidence="1">Phenylalanine--tRNA ligase alpha subunit</fullName>
        <ecNumber evidence="1">6.1.1.20</ecNumber>
    </recommendedName>
    <alternativeName>
        <fullName evidence="1">Phenylalanyl-tRNA synthetase alpha subunit</fullName>
        <shortName evidence="1">PheRS</shortName>
    </alternativeName>
</protein>
<organism>
    <name type="scientific">Vibrio campbellii (strain ATCC BAA-1116)</name>
    <dbReference type="NCBI Taxonomy" id="2902295"/>
    <lineage>
        <taxon>Bacteria</taxon>
        <taxon>Pseudomonadati</taxon>
        <taxon>Pseudomonadota</taxon>
        <taxon>Gammaproteobacteria</taxon>
        <taxon>Vibrionales</taxon>
        <taxon>Vibrionaceae</taxon>
        <taxon>Vibrio</taxon>
    </lineage>
</organism>
<reference key="1">
    <citation type="submission" date="2007-08" db="EMBL/GenBank/DDBJ databases">
        <authorList>
            <consortium name="The Vibrio harveyi Genome Sequencing Project"/>
            <person name="Bassler B."/>
            <person name="Clifton S.W."/>
            <person name="Fulton L."/>
            <person name="Delehaunty K."/>
            <person name="Fronick C."/>
            <person name="Harrison M."/>
            <person name="Markivic C."/>
            <person name="Fulton R."/>
            <person name="Tin-Wollam A.-M."/>
            <person name="Shah N."/>
            <person name="Pepin K."/>
            <person name="Nash W."/>
            <person name="Thiruvilangam P."/>
            <person name="Bhonagiri V."/>
            <person name="Waters C."/>
            <person name="Tu K.C."/>
            <person name="Irgon J."/>
            <person name="Wilson R.K."/>
        </authorList>
    </citation>
    <scope>NUCLEOTIDE SEQUENCE [LARGE SCALE GENOMIC DNA]</scope>
    <source>
        <strain>ATCC BAA-1116 / BB120</strain>
    </source>
</reference>
<comment type="catalytic activity">
    <reaction evidence="1">
        <text>tRNA(Phe) + L-phenylalanine + ATP = L-phenylalanyl-tRNA(Phe) + AMP + diphosphate + H(+)</text>
        <dbReference type="Rhea" id="RHEA:19413"/>
        <dbReference type="Rhea" id="RHEA-COMP:9668"/>
        <dbReference type="Rhea" id="RHEA-COMP:9699"/>
        <dbReference type="ChEBI" id="CHEBI:15378"/>
        <dbReference type="ChEBI" id="CHEBI:30616"/>
        <dbReference type="ChEBI" id="CHEBI:33019"/>
        <dbReference type="ChEBI" id="CHEBI:58095"/>
        <dbReference type="ChEBI" id="CHEBI:78442"/>
        <dbReference type="ChEBI" id="CHEBI:78531"/>
        <dbReference type="ChEBI" id="CHEBI:456215"/>
        <dbReference type="EC" id="6.1.1.20"/>
    </reaction>
</comment>
<comment type="cofactor">
    <cofactor evidence="1">
        <name>Mg(2+)</name>
        <dbReference type="ChEBI" id="CHEBI:18420"/>
    </cofactor>
    <text evidence="1">Binds 2 magnesium ions per tetramer.</text>
</comment>
<comment type="subunit">
    <text evidence="1">Tetramer of two alpha and two beta subunits.</text>
</comment>
<comment type="subcellular location">
    <subcellularLocation>
        <location evidence="1">Cytoplasm</location>
    </subcellularLocation>
</comment>
<comment type="similarity">
    <text evidence="1">Belongs to the class-II aminoacyl-tRNA synthetase family. Phe-tRNA synthetase alpha subunit type 1 subfamily.</text>
</comment>
<keyword id="KW-0030">Aminoacyl-tRNA synthetase</keyword>
<keyword id="KW-0067">ATP-binding</keyword>
<keyword id="KW-0963">Cytoplasm</keyword>
<keyword id="KW-0436">Ligase</keyword>
<keyword id="KW-0460">Magnesium</keyword>
<keyword id="KW-0479">Metal-binding</keyword>
<keyword id="KW-0547">Nucleotide-binding</keyword>
<keyword id="KW-0648">Protein biosynthesis</keyword>
<gene>
    <name evidence="1" type="primary">pheS</name>
    <name type="ordered locus">VIBHAR_02092</name>
</gene>